<gene>
    <name type="primary">grc3</name>
    <name type="ORF">AFUA_2G02190</name>
</gene>
<protein>
    <recommendedName>
        <fullName>Polynucleotide 5'-hydroxyl-kinase grc3</fullName>
        <ecNumber>2.7.1.-</ecNumber>
    </recommendedName>
</protein>
<keyword id="KW-0067">ATP-binding</keyword>
<keyword id="KW-0418">Kinase</keyword>
<keyword id="KW-0547">Nucleotide-binding</keyword>
<keyword id="KW-0539">Nucleus</keyword>
<keyword id="KW-1185">Reference proteome</keyword>
<keyword id="KW-0698">rRNA processing</keyword>
<keyword id="KW-0808">Transferase</keyword>
<accession>Q4WID9</accession>
<accession>A4D9U7</accession>
<organism>
    <name type="scientific">Aspergillus fumigatus (strain ATCC MYA-4609 / CBS 101355 / FGSC A1100 / Af293)</name>
    <name type="common">Neosartorya fumigata</name>
    <dbReference type="NCBI Taxonomy" id="330879"/>
    <lineage>
        <taxon>Eukaryota</taxon>
        <taxon>Fungi</taxon>
        <taxon>Dikarya</taxon>
        <taxon>Ascomycota</taxon>
        <taxon>Pezizomycotina</taxon>
        <taxon>Eurotiomycetes</taxon>
        <taxon>Eurotiomycetidae</taxon>
        <taxon>Eurotiales</taxon>
        <taxon>Aspergillaceae</taxon>
        <taxon>Aspergillus</taxon>
        <taxon>Aspergillus subgen. Fumigati</taxon>
    </lineage>
</organism>
<reference key="1">
    <citation type="journal article" date="2005" name="Nature">
        <title>Genomic sequence of the pathogenic and allergenic filamentous fungus Aspergillus fumigatus.</title>
        <authorList>
            <person name="Nierman W.C."/>
            <person name="Pain A."/>
            <person name="Anderson M.J."/>
            <person name="Wortman J.R."/>
            <person name="Kim H.S."/>
            <person name="Arroyo J."/>
            <person name="Berriman M."/>
            <person name="Abe K."/>
            <person name="Archer D.B."/>
            <person name="Bermejo C."/>
            <person name="Bennett J.W."/>
            <person name="Bowyer P."/>
            <person name="Chen D."/>
            <person name="Collins M."/>
            <person name="Coulsen R."/>
            <person name="Davies R."/>
            <person name="Dyer P.S."/>
            <person name="Farman M.L."/>
            <person name="Fedorova N."/>
            <person name="Fedorova N.D."/>
            <person name="Feldblyum T.V."/>
            <person name="Fischer R."/>
            <person name="Fosker N."/>
            <person name="Fraser A."/>
            <person name="Garcia J.L."/>
            <person name="Garcia M.J."/>
            <person name="Goble A."/>
            <person name="Goldman G.H."/>
            <person name="Gomi K."/>
            <person name="Griffith-Jones S."/>
            <person name="Gwilliam R."/>
            <person name="Haas B.J."/>
            <person name="Haas H."/>
            <person name="Harris D.E."/>
            <person name="Horiuchi H."/>
            <person name="Huang J."/>
            <person name="Humphray S."/>
            <person name="Jimenez J."/>
            <person name="Keller N."/>
            <person name="Khouri H."/>
            <person name="Kitamoto K."/>
            <person name="Kobayashi T."/>
            <person name="Konzack S."/>
            <person name="Kulkarni R."/>
            <person name="Kumagai T."/>
            <person name="Lafton A."/>
            <person name="Latge J.-P."/>
            <person name="Li W."/>
            <person name="Lord A."/>
            <person name="Lu C."/>
            <person name="Majoros W.H."/>
            <person name="May G.S."/>
            <person name="Miller B.L."/>
            <person name="Mohamoud Y."/>
            <person name="Molina M."/>
            <person name="Monod M."/>
            <person name="Mouyna I."/>
            <person name="Mulligan S."/>
            <person name="Murphy L.D."/>
            <person name="O'Neil S."/>
            <person name="Paulsen I."/>
            <person name="Penalva M.A."/>
            <person name="Pertea M."/>
            <person name="Price C."/>
            <person name="Pritchard B.L."/>
            <person name="Quail M.A."/>
            <person name="Rabbinowitsch E."/>
            <person name="Rawlins N."/>
            <person name="Rajandream M.A."/>
            <person name="Reichard U."/>
            <person name="Renauld H."/>
            <person name="Robson G.D."/>
            <person name="Rodriguez de Cordoba S."/>
            <person name="Rodriguez-Pena J.M."/>
            <person name="Ronning C.M."/>
            <person name="Rutter S."/>
            <person name="Salzberg S.L."/>
            <person name="Sanchez M."/>
            <person name="Sanchez-Ferrero J.C."/>
            <person name="Saunders D."/>
            <person name="Seeger K."/>
            <person name="Squares R."/>
            <person name="Squares S."/>
            <person name="Takeuchi M."/>
            <person name="Tekaia F."/>
            <person name="Turner G."/>
            <person name="Vazquez de Aldana C.R."/>
            <person name="Weidman J."/>
            <person name="White O."/>
            <person name="Woodward J.R."/>
            <person name="Yu J.-H."/>
            <person name="Fraser C.M."/>
            <person name="Galagan J.E."/>
            <person name="Asai K."/>
            <person name="Machida M."/>
            <person name="Hall N."/>
            <person name="Barrell B.G."/>
            <person name="Denning D.W."/>
        </authorList>
    </citation>
    <scope>NUCLEOTIDE SEQUENCE [LARGE SCALE GENOMIC DNA]</scope>
    <source>
        <strain>ATCC MYA-4609 / CBS 101355 / FGSC A1100 / Af293</strain>
    </source>
</reference>
<proteinExistence type="inferred from homology"/>
<evidence type="ECO:0000250" key="1"/>
<evidence type="ECO:0000255" key="2"/>
<evidence type="ECO:0000256" key="3">
    <source>
        <dbReference type="SAM" id="MobiDB-lite"/>
    </source>
</evidence>
<evidence type="ECO:0000305" key="4"/>
<sequence length="841" mass="92574">MKRKAEKQQATAPVSAFAARKARQQQARLLEPEKTAQNEPAVEPPSKRARRSPEEGAARQAANENDRVQTRRSARTKAETLSSAELAEKQPQESAAAARAQTAERTPPPEKGDADTFDAAEEEEEEEKEEDILERENGVGVIAVEDDAEGYESPADDVPQVQNFPLSKTRLNKSNIVSSDERTLCVRIKEKMTLVLLGHYDLWVKRGVISLMGAKLHPSPRLYRVYAPSTHSLPVIKCVAGVDGESEIEVKSCNSGIYRLRHLSPLYQRIWNGKHTAADKLTLKKVSASTKRTFSVLYTSSDDSWNRHLRPLHLEKQWSSAIRSLSQRGGRLKVLICGPKASGKSTFSRYLLNHLLSPAPQTENNHRNTDGVAFLDLDPGQPEFCPMGQVYLAHLRSPFFGPPFTHPSLAESQDGSIIRSHHIGAISPKEDPDHYVLAAMDLMDRYRALLASYPQCPLIINYPGWIFGLGLEVATWLVKSLGLSDVVYMSEKGPAEVVEPLGHAAQEARVPLTTLPSQPTDFVSRSSAQLRSMQVQSYFHMSHPSEIHNPQWLDTTMSRTRPLVVDYAGPRQGIRGIMVMGSQISPNLLHEALDGALVGVVAVESPNAIMGQADAAGFSGSSHGDATQGAEDLSSAASDIDMNDVTDACHGDVAPTSSSSFESMIIRTPNEDLPYLFVGSGSCNPLDPKASNCLGLALVRSIDVPSRKLELITPIPASKLRDALEQGHGIVLVRGMLDNPSWAISEDYYAARAAERRHQELVAKARKETNTRDGQDAAVDADTQGMVSALLKDRIRRASNVPWMTVIEDNSRRHREAAQRKKSLWKLRKKAYPGSESETDW</sequence>
<comment type="function">
    <text evidence="1">Polynucleotide 5'-kinase involved in rRNA processing.</text>
</comment>
<comment type="subcellular location">
    <subcellularLocation>
        <location evidence="1">Nucleus</location>
        <location evidence="1">Nucleolus</location>
    </subcellularLocation>
</comment>
<comment type="similarity">
    <text evidence="4">Belongs to the Clp1 family. NOL9/GRC3 subfamily.</text>
</comment>
<comment type="sequence caution" evidence="4">
    <conflict type="erroneous gene model prediction">
        <sequence resource="EMBL-CDS" id="EBA27309"/>
    </conflict>
</comment>
<name>GRC3_ASPFU</name>
<feature type="chain" id="PRO_0000087588" description="Polynucleotide 5'-hydroxyl-kinase grc3">
    <location>
        <begin position="1"/>
        <end position="841"/>
    </location>
</feature>
<feature type="region of interest" description="Disordered" evidence="3">
    <location>
        <begin position="1"/>
        <end position="133"/>
    </location>
</feature>
<feature type="region of interest" description="Disordered" evidence="3">
    <location>
        <begin position="812"/>
        <end position="841"/>
    </location>
</feature>
<feature type="compositionally biased region" description="Low complexity" evidence="3">
    <location>
        <begin position="16"/>
        <end position="28"/>
    </location>
</feature>
<feature type="compositionally biased region" description="Low complexity" evidence="3">
    <location>
        <begin position="92"/>
        <end position="105"/>
    </location>
</feature>
<feature type="compositionally biased region" description="Acidic residues" evidence="3">
    <location>
        <begin position="115"/>
        <end position="133"/>
    </location>
</feature>
<feature type="compositionally biased region" description="Basic residues" evidence="3">
    <location>
        <begin position="812"/>
        <end position="831"/>
    </location>
</feature>
<feature type="binding site" evidence="2">
    <location>
        <begin position="338"/>
        <end position="345"/>
    </location>
    <ligand>
        <name>ATP</name>
        <dbReference type="ChEBI" id="CHEBI:30616"/>
    </ligand>
</feature>
<dbReference type="EC" id="2.7.1.-"/>
<dbReference type="EMBL" id="AAHF01000008">
    <property type="protein sequence ID" value="EBA27309.1"/>
    <property type="status" value="ALT_SEQ"/>
    <property type="molecule type" value="Genomic_DNA"/>
</dbReference>
<dbReference type="RefSeq" id="XP_001481647.1">
    <property type="nucleotide sequence ID" value="XM_001481597.1"/>
</dbReference>
<dbReference type="SMR" id="Q4WID9"/>
<dbReference type="FunCoup" id="Q4WID9">
    <property type="interactions" value="147"/>
</dbReference>
<dbReference type="STRING" id="330879.Q4WID9"/>
<dbReference type="GeneID" id="5076960"/>
<dbReference type="KEGG" id="afm:AFUA_2G02190"/>
<dbReference type="VEuPathDB" id="FungiDB:Afu2g02190"/>
<dbReference type="eggNOG" id="KOG2750">
    <property type="taxonomic scope" value="Eukaryota"/>
</dbReference>
<dbReference type="HOGENOM" id="CLU_010345_1_2_1"/>
<dbReference type="InParanoid" id="Q4WID9"/>
<dbReference type="OrthoDB" id="4054781at2759"/>
<dbReference type="Proteomes" id="UP000002530">
    <property type="component" value="Chromosome 2"/>
</dbReference>
<dbReference type="GO" id="GO:0005730">
    <property type="term" value="C:nucleolus"/>
    <property type="evidence" value="ECO:0007669"/>
    <property type="project" value="UniProtKB-SubCell"/>
</dbReference>
<dbReference type="GO" id="GO:0005634">
    <property type="term" value="C:nucleus"/>
    <property type="evidence" value="ECO:0000318"/>
    <property type="project" value="GO_Central"/>
</dbReference>
<dbReference type="GO" id="GO:0005524">
    <property type="term" value="F:ATP binding"/>
    <property type="evidence" value="ECO:0007669"/>
    <property type="project" value="UniProtKB-KW"/>
</dbReference>
<dbReference type="GO" id="GO:0051731">
    <property type="term" value="F:polynucleotide 5'-hydroxyl-kinase activity"/>
    <property type="evidence" value="ECO:0000250"/>
    <property type="project" value="UniProtKB"/>
</dbReference>
<dbReference type="GO" id="GO:0000448">
    <property type="term" value="P:cleavage in ITS2 between 5.8S rRNA and LSU-rRNA of tricistronic rRNA transcript (SSU-rRNA, 5.8S rRNA, LSU-rRNA)"/>
    <property type="evidence" value="ECO:0000318"/>
    <property type="project" value="GO_Central"/>
</dbReference>
<dbReference type="GO" id="GO:0006364">
    <property type="term" value="P:rRNA processing"/>
    <property type="evidence" value="ECO:0000250"/>
    <property type="project" value="UniProtKB"/>
</dbReference>
<dbReference type="FunFam" id="3.40.50.300:FF:001156">
    <property type="entry name" value="Polynucleotide 5-hydroxyl-kinase grc3"/>
    <property type="match status" value="1"/>
</dbReference>
<dbReference type="Gene3D" id="3.40.50.300">
    <property type="entry name" value="P-loop containing nucleotide triphosphate hydrolases"/>
    <property type="match status" value="1"/>
</dbReference>
<dbReference type="InterPro" id="IPR045116">
    <property type="entry name" value="Clp1/Grc3"/>
</dbReference>
<dbReference type="InterPro" id="IPR032319">
    <property type="entry name" value="CLP1_P"/>
</dbReference>
<dbReference type="InterPro" id="IPR027417">
    <property type="entry name" value="P-loop_NTPase"/>
</dbReference>
<dbReference type="PANTHER" id="PTHR12755">
    <property type="entry name" value="CLEAVAGE/POLYADENYLATION FACTOR IA SUBUNIT CLP1P"/>
    <property type="match status" value="1"/>
</dbReference>
<dbReference type="PANTHER" id="PTHR12755:SF3">
    <property type="entry name" value="POLYNUCLEOTIDE 5'-HYDROXYL-KINASE NOL9"/>
    <property type="match status" value="1"/>
</dbReference>
<dbReference type="Pfam" id="PF16575">
    <property type="entry name" value="CLP1_P"/>
    <property type="match status" value="1"/>
</dbReference>